<organism>
    <name type="scientific">Haloterrigena sp. (strain arg-4)</name>
    <dbReference type="NCBI Taxonomy" id="160432"/>
    <lineage>
        <taxon>Archaea</taxon>
        <taxon>Methanobacteriati</taxon>
        <taxon>Methanobacteriota</taxon>
        <taxon>Stenosarchaea group</taxon>
        <taxon>Halobacteria</taxon>
        <taxon>Halobacteriales</taxon>
        <taxon>Natrialbaceae</taxon>
        <taxon>Haloterrigena</taxon>
    </lineage>
</organism>
<dbReference type="EMBL" id="AB009621">
    <property type="protein sequence ID" value="BAA75201.2"/>
    <property type="status" value="ALT_FRAME"/>
    <property type="molecule type" value="Genomic_DNA"/>
</dbReference>
<dbReference type="SMR" id="O93741"/>
<dbReference type="GO" id="GO:0005886">
    <property type="term" value="C:plasma membrane"/>
    <property type="evidence" value="ECO:0007669"/>
    <property type="project" value="UniProtKB-SubCell"/>
</dbReference>
<dbReference type="GO" id="GO:0005216">
    <property type="term" value="F:monoatomic ion channel activity"/>
    <property type="evidence" value="ECO:0007669"/>
    <property type="project" value="InterPro"/>
</dbReference>
<dbReference type="GO" id="GO:0009881">
    <property type="term" value="F:photoreceptor activity"/>
    <property type="evidence" value="ECO:0007669"/>
    <property type="project" value="UniProtKB-KW"/>
</dbReference>
<dbReference type="GO" id="GO:0007602">
    <property type="term" value="P:phototransduction"/>
    <property type="evidence" value="ECO:0007669"/>
    <property type="project" value="UniProtKB-KW"/>
</dbReference>
<dbReference type="CDD" id="cd15243">
    <property type="entry name" value="7tm_Halorhodopsin"/>
    <property type="match status" value="1"/>
</dbReference>
<dbReference type="Gene3D" id="1.20.1070.10">
    <property type="entry name" value="Rhodopsin 7-helix transmembrane proteins"/>
    <property type="match status" value="1"/>
</dbReference>
<dbReference type="InterPro" id="IPR001425">
    <property type="entry name" value="Arc/bac/fun_rhodopsins"/>
</dbReference>
<dbReference type="InterPro" id="IPR018229">
    <property type="entry name" value="Rhodopsin_retinal_BS"/>
</dbReference>
<dbReference type="PANTHER" id="PTHR28286">
    <property type="match status" value="1"/>
</dbReference>
<dbReference type="PANTHER" id="PTHR28286:SF2">
    <property type="entry name" value="BACTERIORHODOPSIN _OPSIN, NOPA (EUROFUNG)"/>
    <property type="match status" value="1"/>
</dbReference>
<dbReference type="Pfam" id="PF01036">
    <property type="entry name" value="Bac_rhodopsin"/>
    <property type="match status" value="1"/>
</dbReference>
<dbReference type="PRINTS" id="PR00251">
    <property type="entry name" value="BACTRLOPSIN"/>
</dbReference>
<dbReference type="SMART" id="SM01021">
    <property type="entry name" value="Bac_rhodopsin"/>
    <property type="match status" value="1"/>
</dbReference>
<dbReference type="SUPFAM" id="SSF81321">
    <property type="entry name" value="Family A G protein-coupled receptor-like"/>
    <property type="match status" value="1"/>
</dbReference>
<dbReference type="PROSITE" id="PS00950">
    <property type="entry name" value="BACTERIAL_OPSIN_1"/>
    <property type="match status" value="1"/>
</dbReference>
<reference key="1">
    <citation type="journal article" date="1999" name="J. Mol. Biol.">
        <title>Evolution of the archaeal rhodopsins: evolution rate changes by gene duplication and functional differentiation.</title>
        <authorList>
            <person name="Ihara K."/>
            <person name="Umemura T."/>
            <person name="Katagiri I."/>
            <person name="Kitajima-Ihara T."/>
            <person name="Sugiyama Y."/>
            <person name="Kimura Y."/>
            <person name="Mukohata Y."/>
        </authorList>
    </citation>
    <scope>NUCLEOTIDE SEQUENCE [GENOMIC DNA]</scope>
</reference>
<keyword id="KW-1003">Cell membrane</keyword>
<keyword id="KW-0868">Chloride</keyword>
<keyword id="KW-0157">Chromophore</keyword>
<keyword id="KW-0406">Ion transport</keyword>
<keyword id="KW-0472">Membrane</keyword>
<keyword id="KW-0600">Photoreceptor protein</keyword>
<keyword id="KW-0675">Receptor</keyword>
<keyword id="KW-0681">Retinal protein</keyword>
<keyword id="KW-0716">Sensory transduction</keyword>
<keyword id="KW-0812">Transmembrane</keyword>
<keyword id="KW-1133">Transmembrane helix</keyword>
<keyword id="KW-0813">Transport</keyword>
<feature type="chain" id="PRO_0000196264" description="Halorhodopsin">
    <location>
        <begin position="1"/>
        <end position="297"/>
    </location>
</feature>
<feature type="topological domain" description="Extracellular" evidence="1">
    <location>
        <begin position="1"/>
        <end position="45"/>
    </location>
</feature>
<feature type="transmembrane region" description="Helical; Name=Helix A" evidence="1">
    <location>
        <begin position="46"/>
        <end position="71"/>
    </location>
</feature>
<feature type="topological domain" description="Cytoplasmic" evidence="1">
    <location>
        <begin position="72"/>
        <end position="77"/>
    </location>
</feature>
<feature type="transmembrane region" description="Helical; Name=Helix B" evidence="1">
    <location>
        <begin position="78"/>
        <end position="101"/>
    </location>
</feature>
<feature type="topological domain" description="Extracellular" evidence="1">
    <location>
        <begin position="102"/>
        <end position="125"/>
    </location>
</feature>
<feature type="transmembrane region" description="Helical; Name=Helix C" evidence="1">
    <location>
        <begin position="126"/>
        <end position="147"/>
    </location>
</feature>
<feature type="topological domain" description="Cytoplasmic" evidence="1">
    <location>
        <begin position="148"/>
        <end position="150"/>
    </location>
</feature>
<feature type="transmembrane region" description="Helical; Name=Helix D" evidence="1">
    <location>
        <begin position="151"/>
        <end position="174"/>
    </location>
</feature>
<feature type="topological domain" description="Extracellular" evidence="1">
    <location>
        <begin position="175"/>
        <end position="177"/>
    </location>
</feature>
<feature type="transmembrane region" description="Helical; Name=Helix E" evidence="1">
    <location>
        <begin position="178"/>
        <end position="200"/>
    </location>
</feature>
<feature type="topological domain" description="Cytoplasmic" evidence="1">
    <location>
        <begin position="201"/>
        <end position="212"/>
    </location>
</feature>
<feature type="transmembrane region" description="Helical; Name=Helix F" evidence="1">
    <location>
        <begin position="213"/>
        <end position="236"/>
    </location>
</feature>
<feature type="topological domain" description="Extracellular" evidence="1">
    <location>
        <begin position="237"/>
        <end position="246"/>
    </location>
</feature>
<feature type="transmembrane region" description="Helical; Name=Helix G" evidence="1">
    <location>
        <begin position="247"/>
        <end position="275"/>
    </location>
</feature>
<feature type="topological domain" description="Cytoplasmic" evidence="1">
    <location>
        <begin position="276"/>
        <end position="297"/>
    </location>
</feature>
<feature type="region of interest" description="Disordered" evidence="2">
    <location>
        <begin position="1"/>
        <end position="31"/>
    </location>
</feature>
<feature type="modified residue" description="N6-(retinylidene)lysine" evidence="1">
    <location>
        <position position="262"/>
    </location>
</feature>
<protein>
    <recommendedName>
        <fullName>Halorhodopsin</fullName>
        <shortName>HR</shortName>
    </recommendedName>
</protein>
<name>BACH_HALS4</name>
<sequence>MRSRTYHDQSVCGPYGSQRTDCDRDTDAGSDTDVHGAQVATQIRTDTLLHSSLWVNIALAGLSILVFLYMARTVRANRARLIVGATLMIPLVSLSSYLGLVTGLTAGPIEMPAAHALAGEDVLSQWGRYLTWTLSTPMILLALGWLAEVDTADLFVVIAADIGMCLTGLAAALTTSSYAFRWAFYLVSTAFFVVVLYALLAKWPTNAEAAGTGDIFGTLRWLTVILWLGYPILWALGVEGFALVDSVGLTSWGYSLLDIGAKYLFAALLLRWVANNERTIAVGQRSGRGAIGDPVED</sequence>
<proteinExistence type="inferred from homology"/>
<gene>
    <name type="primary">hop</name>
</gene>
<comment type="function">
    <text>Light-driven chloride pump.</text>
</comment>
<comment type="subcellular location">
    <subcellularLocation>
        <location>Cell membrane</location>
        <topology>Multi-pass membrane protein</topology>
    </subcellularLocation>
</comment>
<comment type="similarity">
    <text evidence="3">Belongs to the archaeal/bacterial/fungal opsin family.</text>
</comment>
<comment type="sequence caution" evidence="3">
    <conflict type="frameshift">
        <sequence resource="EMBL-CDS" id="BAA75201"/>
    </conflict>
</comment>
<evidence type="ECO:0000250" key="1"/>
<evidence type="ECO:0000256" key="2">
    <source>
        <dbReference type="SAM" id="MobiDB-lite"/>
    </source>
</evidence>
<evidence type="ECO:0000305" key="3"/>
<accession>O93741</accession>